<gene>
    <name evidence="1" type="primary">ubiE</name>
    <name type="ordered locus">BPP3995</name>
</gene>
<keyword id="KW-0474">Menaquinone biosynthesis</keyword>
<keyword id="KW-0489">Methyltransferase</keyword>
<keyword id="KW-0949">S-adenosyl-L-methionine</keyword>
<keyword id="KW-0808">Transferase</keyword>
<keyword id="KW-0831">Ubiquinone biosynthesis</keyword>
<comment type="function">
    <text evidence="1">Methyltransferase required for the conversion of demethylmenaquinol (DMKH2) to menaquinol (MKH2) and the conversion of 2-polyprenyl-6-methoxy-1,4-benzoquinol (DDMQH2) to 2-polyprenyl-3-methyl-6-methoxy-1,4-benzoquinol (DMQH2).</text>
</comment>
<comment type="catalytic activity">
    <reaction evidence="1">
        <text>a 2-demethylmenaquinol + S-adenosyl-L-methionine = a menaquinol + S-adenosyl-L-homocysteine + H(+)</text>
        <dbReference type="Rhea" id="RHEA:42640"/>
        <dbReference type="Rhea" id="RHEA-COMP:9539"/>
        <dbReference type="Rhea" id="RHEA-COMP:9563"/>
        <dbReference type="ChEBI" id="CHEBI:15378"/>
        <dbReference type="ChEBI" id="CHEBI:18151"/>
        <dbReference type="ChEBI" id="CHEBI:55437"/>
        <dbReference type="ChEBI" id="CHEBI:57856"/>
        <dbReference type="ChEBI" id="CHEBI:59789"/>
        <dbReference type="EC" id="2.1.1.163"/>
    </reaction>
</comment>
<comment type="catalytic activity">
    <reaction evidence="1">
        <text>a 2-methoxy-6-(all-trans-polyprenyl)benzene-1,4-diol + S-adenosyl-L-methionine = a 5-methoxy-2-methyl-3-(all-trans-polyprenyl)benzene-1,4-diol + S-adenosyl-L-homocysteine + H(+)</text>
        <dbReference type="Rhea" id="RHEA:28286"/>
        <dbReference type="Rhea" id="RHEA-COMP:10858"/>
        <dbReference type="Rhea" id="RHEA-COMP:10859"/>
        <dbReference type="ChEBI" id="CHEBI:15378"/>
        <dbReference type="ChEBI" id="CHEBI:57856"/>
        <dbReference type="ChEBI" id="CHEBI:59789"/>
        <dbReference type="ChEBI" id="CHEBI:84166"/>
        <dbReference type="ChEBI" id="CHEBI:84167"/>
        <dbReference type="EC" id="2.1.1.201"/>
    </reaction>
</comment>
<comment type="pathway">
    <text evidence="1">Quinol/quinone metabolism; menaquinone biosynthesis; menaquinol from 1,4-dihydroxy-2-naphthoate: step 2/2.</text>
</comment>
<comment type="pathway">
    <text evidence="1">Cofactor biosynthesis; ubiquinone biosynthesis.</text>
</comment>
<comment type="similarity">
    <text evidence="1">Belongs to the class I-like SAM-binding methyltransferase superfamily. MenG/UbiE family.</text>
</comment>
<reference key="1">
    <citation type="journal article" date="2003" name="Nat. Genet.">
        <title>Comparative analysis of the genome sequences of Bordetella pertussis, Bordetella parapertussis and Bordetella bronchiseptica.</title>
        <authorList>
            <person name="Parkhill J."/>
            <person name="Sebaihia M."/>
            <person name="Preston A."/>
            <person name="Murphy L.D."/>
            <person name="Thomson N.R."/>
            <person name="Harris D.E."/>
            <person name="Holden M.T.G."/>
            <person name="Churcher C.M."/>
            <person name="Bentley S.D."/>
            <person name="Mungall K.L."/>
            <person name="Cerdeno-Tarraga A.-M."/>
            <person name="Temple L."/>
            <person name="James K.D."/>
            <person name="Harris B."/>
            <person name="Quail M.A."/>
            <person name="Achtman M."/>
            <person name="Atkin R."/>
            <person name="Baker S."/>
            <person name="Basham D."/>
            <person name="Bason N."/>
            <person name="Cherevach I."/>
            <person name="Chillingworth T."/>
            <person name="Collins M."/>
            <person name="Cronin A."/>
            <person name="Davis P."/>
            <person name="Doggett J."/>
            <person name="Feltwell T."/>
            <person name="Goble A."/>
            <person name="Hamlin N."/>
            <person name="Hauser H."/>
            <person name="Holroyd S."/>
            <person name="Jagels K."/>
            <person name="Leather S."/>
            <person name="Moule S."/>
            <person name="Norberczak H."/>
            <person name="O'Neil S."/>
            <person name="Ormond D."/>
            <person name="Price C."/>
            <person name="Rabbinowitsch E."/>
            <person name="Rutter S."/>
            <person name="Sanders M."/>
            <person name="Saunders D."/>
            <person name="Seeger K."/>
            <person name="Sharp S."/>
            <person name="Simmonds M."/>
            <person name="Skelton J."/>
            <person name="Squares R."/>
            <person name="Squares S."/>
            <person name="Stevens K."/>
            <person name="Unwin L."/>
            <person name="Whitehead S."/>
            <person name="Barrell B.G."/>
            <person name="Maskell D.J."/>
        </authorList>
    </citation>
    <scope>NUCLEOTIDE SEQUENCE [LARGE SCALE GENOMIC DNA]</scope>
    <source>
        <strain>12822 / ATCC BAA-587 / NCTC 13253</strain>
    </source>
</reference>
<sequence>MQTPHSQPESAPQGEQSTHFGFQSVPEADKARKVAEVFHSVASRYDVMNDLMSAGLHRVWKAFTIGRAAVRPGMKVLDIAGGTGDLARAFAKRAGPSGEVWLTDINESMLRVGRDRLTDSGLLVPTAVCDAERLPFPSQYFDRVSVAFGLRNMTHKDRALAEMTRVLKPGGKLLVLEFSRVAKPLAPAYDWYSFNVLPWMGKKVANDEASYRYLAESIRMHPDQETLAGMLRDAGLDRVQYFNLTAGVAALHEGVRLG</sequence>
<feature type="chain" id="PRO_0000193253" description="Ubiquinone/menaquinone biosynthesis C-methyltransferase UbiE">
    <location>
        <begin position="1"/>
        <end position="258"/>
    </location>
</feature>
<feature type="binding site" evidence="1">
    <location>
        <position position="83"/>
    </location>
    <ligand>
        <name>S-adenosyl-L-methionine</name>
        <dbReference type="ChEBI" id="CHEBI:59789"/>
    </ligand>
</feature>
<feature type="binding site" evidence="1">
    <location>
        <position position="104"/>
    </location>
    <ligand>
        <name>S-adenosyl-L-methionine</name>
        <dbReference type="ChEBI" id="CHEBI:59789"/>
    </ligand>
</feature>
<feature type="binding site" evidence="1">
    <location>
        <begin position="130"/>
        <end position="131"/>
    </location>
    <ligand>
        <name>S-adenosyl-L-methionine</name>
        <dbReference type="ChEBI" id="CHEBI:59789"/>
    </ligand>
</feature>
<evidence type="ECO:0000255" key="1">
    <source>
        <dbReference type="HAMAP-Rule" id="MF_01813"/>
    </source>
</evidence>
<proteinExistence type="inferred from homology"/>
<organism>
    <name type="scientific">Bordetella parapertussis (strain 12822 / ATCC BAA-587 / NCTC 13253)</name>
    <dbReference type="NCBI Taxonomy" id="257311"/>
    <lineage>
        <taxon>Bacteria</taxon>
        <taxon>Pseudomonadati</taxon>
        <taxon>Pseudomonadota</taxon>
        <taxon>Betaproteobacteria</taxon>
        <taxon>Burkholderiales</taxon>
        <taxon>Alcaligenaceae</taxon>
        <taxon>Bordetella</taxon>
    </lineage>
</organism>
<name>UBIE_BORPA</name>
<accession>Q7W3N6</accession>
<dbReference type="EC" id="2.1.1.163" evidence="1"/>
<dbReference type="EC" id="2.1.1.201" evidence="1"/>
<dbReference type="EMBL" id="BX640435">
    <property type="protein sequence ID" value="CAE39278.1"/>
    <property type="molecule type" value="Genomic_DNA"/>
</dbReference>
<dbReference type="RefSeq" id="WP_003815111.1">
    <property type="nucleotide sequence ID" value="NC_002928.3"/>
</dbReference>
<dbReference type="SMR" id="Q7W3N6"/>
<dbReference type="GeneID" id="93205794"/>
<dbReference type="KEGG" id="bpa:BPP3995"/>
<dbReference type="HOGENOM" id="CLU_037990_0_0_4"/>
<dbReference type="UniPathway" id="UPA00079">
    <property type="reaction ID" value="UER00169"/>
</dbReference>
<dbReference type="UniPathway" id="UPA00232"/>
<dbReference type="Proteomes" id="UP000001421">
    <property type="component" value="Chromosome"/>
</dbReference>
<dbReference type="GO" id="GO:0008425">
    <property type="term" value="F:2-methoxy-6-polyprenyl-1,4-benzoquinol methyltransferase activity"/>
    <property type="evidence" value="ECO:0007669"/>
    <property type="project" value="UniProtKB-UniRule"/>
</dbReference>
<dbReference type="GO" id="GO:0043770">
    <property type="term" value="F:demethylmenaquinone methyltransferase activity"/>
    <property type="evidence" value="ECO:0007669"/>
    <property type="project" value="UniProtKB-UniRule"/>
</dbReference>
<dbReference type="GO" id="GO:0009060">
    <property type="term" value="P:aerobic respiration"/>
    <property type="evidence" value="ECO:0007669"/>
    <property type="project" value="UniProtKB-UniRule"/>
</dbReference>
<dbReference type="GO" id="GO:0009234">
    <property type="term" value="P:menaquinone biosynthetic process"/>
    <property type="evidence" value="ECO:0007669"/>
    <property type="project" value="UniProtKB-UniRule"/>
</dbReference>
<dbReference type="GO" id="GO:0032259">
    <property type="term" value="P:methylation"/>
    <property type="evidence" value="ECO:0007669"/>
    <property type="project" value="UniProtKB-KW"/>
</dbReference>
<dbReference type="CDD" id="cd02440">
    <property type="entry name" value="AdoMet_MTases"/>
    <property type="match status" value="1"/>
</dbReference>
<dbReference type="Gene3D" id="3.40.50.150">
    <property type="entry name" value="Vaccinia Virus protein VP39"/>
    <property type="match status" value="1"/>
</dbReference>
<dbReference type="HAMAP" id="MF_01813">
    <property type="entry name" value="MenG_UbiE_methyltr"/>
    <property type="match status" value="1"/>
</dbReference>
<dbReference type="InterPro" id="IPR029063">
    <property type="entry name" value="SAM-dependent_MTases_sf"/>
</dbReference>
<dbReference type="InterPro" id="IPR004033">
    <property type="entry name" value="UbiE/COQ5_MeTrFase"/>
</dbReference>
<dbReference type="InterPro" id="IPR023576">
    <property type="entry name" value="UbiE/COQ5_MeTrFase_CS"/>
</dbReference>
<dbReference type="NCBIfam" id="TIGR01934">
    <property type="entry name" value="MenG_MenH_UbiE"/>
    <property type="match status" value="1"/>
</dbReference>
<dbReference type="NCBIfam" id="NF001240">
    <property type="entry name" value="PRK00216.1-1"/>
    <property type="match status" value="1"/>
</dbReference>
<dbReference type="PANTHER" id="PTHR43591:SF24">
    <property type="entry name" value="2-METHOXY-6-POLYPRENYL-1,4-BENZOQUINOL METHYLASE, MITOCHONDRIAL"/>
    <property type="match status" value="1"/>
</dbReference>
<dbReference type="PANTHER" id="PTHR43591">
    <property type="entry name" value="METHYLTRANSFERASE"/>
    <property type="match status" value="1"/>
</dbReference>
<dbReference type="Pfam" id="PF01209">
    <property type="entry name" value="Ubie_methyltran"/>
    <property type="match status" value="1"/>
</dbReference>
<dbReference type="SUPFAM" id="SSF53335">
    <property type="entry name" value="S-adenosyl-L-methionine-dependent methyltransferases"/>
    <property type="match status" value="1"/>
</dbReference>
<dbReference type="PROSITE" id="PS51608">
    <property type="entry name" value="SAM_MT_UBIE"/>
    <property type="match status" value="1"/>
</dbReference>
<dbReference type="PROSITE" id="PS01183">
    <property type="entry name" value="UBIE_1"/>
    <property type="match status" value="1"/>
</dbReference>
<dbReference type="PROSITE" id="PS01184">
    <property type="entry name" value="UBIE_2"/>
    <property type="match status" value="1"/>
</dbReference>
<protein>
    <recommendedName>
        <fullName evidence="1">Ubiquinone/menaquinone biosynthesis C-methyltransferase UbiE</fullName>
        <ecNumber evidence="1">2.1.1.163</ecNumber>
        <ecNumber evidence="1">2.1.1.201</ecNumber>
    </recommendedName>
    <alternativeName>
        <fullName evidence="1">2-methoxy-6-polyprenyl-1,4-benzoquinol methylase</fullName>
    </alternativeName>
    <alternativeName>
        <fullName evidence="1">Demethylmenaquinone methyltransferase</fullName>
    </alternativeName>
</protein>